<evidence type="ECO:0000255" key="1">
    <source>
        <dbReference type="HAMAP-Rule" id="MF_00939"/>
    </source>
</evidence>
<evidence type="ECO:0000256" key="2">
    <source>
        <dbReference type="SAM" id="MobiDB-lite"/>
    </source>
</evidence>
<dbReference type="EC" id="5.6.2.2" evidence="1"/>
<dbReference type="EMBL" id="D67075">
    <property type="protein sequence ID" value="BAA11086.1"/>
    <property type="molecule type" value="Genomic_DNA"/>
</dbReference>
<dbReference type="EMBL" id="CP000253">
    <property type="protein sequence ID" value="ABD30447.1"/>
    <property type="molecule type" value="Genomic_DNA"/>
</dbReference>
<dbReference type="RefSeq" id="WP_001548666.1">
    <property type="nucleotide sequence ID" value="NZ_LS483365.1"/>
</dbReference>
<dbReference type="RefSeq" id="YP_499879.1">
    <property type="nucleotide sequence ID" value="NC_007795.1"/>
</dbReference>
<dbReference type="SMR" id="Q2FYS5"/>
<dbReference type="STRING" id="93061.SAOUHSC_01351"/>
<dbReference type="BindingDB" id="Q2FYS5"/>
<dbReference type="PaxDb" id="1280-SAXN108_1371"/>
<dbReference type="GeneID" id="3920057"/>
<dbReference type="KEGG" id="sao:SAOUHSC_01351"/>
<dbReference type="PATRIC" id="fig|93061.5.peg.1237"/>
<dbReference type="eggNOG" id="COG0187">
    <property type="taxonomic scope" value="Bacteria"/>
</dbReference>
<dbReference type="HOGENOM" id="CLU_006146_4_1_9"/>
<dbReference type="OrthoDB" id="9802808at2"/>
<dbReference type="PRO" id="PR:Q2FYS5"/>
<dbReference type="Proteomes" id="UP000008816">
    <property type="component" value="Chromosome"/>
</dbReference>
<dbReference type="GO" id="GO:0005694">
    <property type="term" value="C:chromosome"/>
    <property type="evidence" value="ECO:0007669"/>
    <property type="project" value="InterPro"/>
</dbReference>
<dbReference type="GO" id="GO:0005524">
    <property type="term" value="F:ATP binding"/>
    <property type="evidence" value="ECO:0007669"/>
    <property type="project" value="UniProtKB-UniRule"/>
</dbReference>
<dbReference type="GO" id="GO:0003677">
    <property type="term" value="F:DNA binding"/>
    <property type="evidence" value="ECO:0007669"/>
    <property type="project" value="UniProtKB-UniRule"/>
</dbReference>
<dbReference type="GO" id="GO:0034335">
    <property type="term" value="F:DNA negative supercoiling activity"/>
    <property type="evidence" value="ECO:0007669"/>
    <property type="project" value="UniProtKB-ARBA"/>
</dbReference>
<dbReference type="GO" id="GO:0046872">
    <property type="term" value="F:metal ion binding"/>
    <property type="evidence" value="ECO:0007669"/>
    <property type="project" value="UniProtKB-KW"/>
</dbReference>
<dbReference type="GO" id="GO:0007059">
    <property type="term" value="P:chromosome segregation"/>
    <property type="evidence" value="ECO:0007669"/>
    <property type="project" value="UniProtKB-UniRule"/>
</dbReference>
<dbReference type="GO" id="GO:0006265">
    <property type="term" value="P:DNA topological change"/>
    <property type="evidence" value="ECO:0007669"/>
    <property type="project" value="UniProtKB-UniRule"/>
</dbReference>
<dbReference type="CDD" id="cd16928">
    <property type="entry name" value="HATPase_GyrB-like"/>
    <property type="match status" value="1"/>
</dbReference>
<dbReference type="CDD" id="cd00822">
    <property type="entry name" value="TopoII_Trans_DNA_gyrase"/>
    <property type="match status" value="1"/>
</dbReference>
<dbReference type="FunFam" id="3.30.230.10:FF:000005">
    <property type="entry name" value="DNA gyrase subunit B"/>
    <property type="match status" value="1"/>
</dbReference>
<dbReference type="FunFam" id="3.30.565.10:FF:000002">
    <property type="entry name" value="DNA gyrase subunit B"/>
    <property type="match status" value="1"/>
</dbReference>
<dbReference type="FunFam" id="3.40.50.670:FF:000002">
    <property type="entry name" value="DNA gyrase subunit B"/>
    <property type="match status" value="1"/>
</dbReference>
<dbReference type="Gene3D" id="3.30.230.10">
    <property type="match status" value="1"/>
</dbReference>
<dbReference type="Gene3D" id="3.40.50.670">
    <property type="match status" value="1"/>
</dbReference>
<dbReference type="Gene3D" id="3.30.565.10">
    <property type="entry name" value="Histidine kinase-like ATPase, C-terminal domain"/>
    <property type="match status" value="1"/>
</dbReference>
<dbReference type="HAMAP" id="MF_00939">
    <property type="entry name" value="ParE_type2"/>
    <property type="match status" value="1"/>
</dbReference>
<dbReference type="InterPro" id="IPR002288">
    <property type="entry name" value="DNA_gyrase_B_C"/>
</dbReference>
<dbReference type="InterPro" id="IPR036890">
    <property type="entry name" value="HATPase_C_sf"/>
</dbReference>
<dbReference type="InterPro" id="IPR005740">
    <property type="entry name" value="ParE_type2"/>
</dbReference>
<dbReference type="InterPro" id="IPR020568">
    <property type="entry name" value="Ribosomal_Su5_D2-typ_SF"/>
</dbReference>
<dbReference type="InterPro" id="IPR014721">
    <property type="entry name" value="Ribsml_uS5_D2-typ_fold_subgr"/>
</dbReference>
<dbReference type="InterPro" id="IPR001241">
    <property type="entry name" value="Topo_IIA"/>
</dbReference>
<dbReference type="InterPro" id="IPR013760">
    <property type="entry name" value="Topo_IIA-like_dom_sf"/>
</dbReference>
<dbReference type="InterPro" id="IPR000565">
    <property type="entry name" value="Topo_IIA_B"/>
</dbReference>
<dbReference type="InterPro" id="IPR013759">
    <property type="entry name" value="Topo_IIA_B_C"/>
</dbReference>
<dbReference type="InterPro" id="IPR013506">
    <property type="entry name" value="Topo_IIA_bsu_dom2"/>
</dbReference>
<dbReference type="InterPro" id="IPR018522">
    <property type="entry name" value="TopoIIA_CS"/>
</dbReference>
<dbReference type="InterPro" id="IPR006171">
    <property type="entry name" value="TOPRIM_dom"/>
</dbReference>
<dbReference type="NCBIfam" id="TIGR01058">
    <property type="entry name" value="parE_Gpos"/>
    <property type="match status" value="1"/>
</dbReference>
<dbReference type="NCBIfam" id="NF004189">
    <property type="entry name" value="PRK05644.1"/>
    <property type="match status" value="1"/>
</dbReference>
<dbReference type="PANTHER" id="PTHR45866">
    <property type="entry name" value="DNA GYRASE/TOPOISOMERASE SUBUNIT B"/>
    <property type="match status" value="1"/>
</dbReference>
<dbReference type="PANTHER" id="PTHR45866:SF12">
    <property type="entry name" value="DNA TOPOISOMERASE 4 SUBUNIT B"/>
    <property type="match status" value="1"/>
</dbReference>
<dbReference type="Pfam" id="PF00204">
    <property type="entry name" value="DNA_gyraseB"/>
    <property type="match status" value="1"/>
</dbReference>
<dbReference type="Pfam" id="PF00986">
    <property type="entry name" value="DNA_gyraseB_C"/>
    <property type="match status" value="1"/>
</dbReference>
<dbReference type="Pfam" id="PF02518">
    <property type="entry name" value="HATPase_c"/>
    <property type="match status" value="1"/>
</dbReference>
<dbReference type="Pfam" id="PF01751">
    <property type="entry name" value="Toprim"/>
    <property type="match status" value="1"/>
</dbReference>
<dbReference type="PRINTS" id="PR01159">
    <property type="entry name" value="DNAGYRASEB"/>
</dbReference>
<dbReference type="PRINTS" id="PR00418">
    <property type="entry name" value="TPI2FAMILY"/>
</dbReference>
<dbReference type="SMART" id="SM00387">
    <property type="entry name" value="HATPase_c"/>
    <property type="match status" value="1"/>
</dbReference>
<dbReference type="SMART" id="SM00433">
    <property type="entry name" value="TOP2c"/>
    <property type="match status" value="1"/>
</dbReference>
<dbReference type="SUPFAM" id="SSF55874">
    <property type="entry name" value="ATPase domain of HSP90 chaperone/DNA topoisomerase II/histidine kinase"/>
    <property type="match status" value="1"/>
</dbReference>
<dbReference type="SUPFAM" id="SSF54211">
    <property type="entry name" value="Ribosomal protein S5 domain 2-like"/>
    <property type="match status" value="1"/>
</dbReference>
<dbReference type="SUPFAM" id="SSF56719">
    <property type="entry name" value="Type II DNA topoisomerase"/>
    <property type="match status" value="1"/>
</dbReference>
<dbReference type="PROSITE" id="PS00177">
    <property type="entry name" value="TOPOISOMERASE_II"/>
    <property type="match status" value="1"/>
</dbReference>
<dbReference type="PROSITE" id="PS50880">
    <property type="entry name" value="TOPRIM"/>
    <property type="match status" value="1"/>
</dbReference>
<proteinExistence type="inferred from homology"/>
<gene>
    <name evidence="1" type="primary">parE</name>
    <name type="synonym">grlB</name>
    <name type="ordered locus">SAOUHSC_01351</name>
</gene>
<reference key="1">
    <citation type="journal article" date="1996" name="Antimicrob. Agents Chemother.">
        <title>Alterations in the DNA topoisomerase IV grlA gene responsible for quinolone resistance in Staphylococcus aureus.</title>
        <authorList>
            <person name="Yamagishi J."/>
            <person name="Kojima T."/>
            <person name="Oyamada Y."/>
            <person name="Fujimoto K."/>
            <person name="Hattori H."/>
            <person name="Nakamura S."/>
            <person name="Inoue M."/>
        </authorList>
    </citation>
    <scope>NUCLEOTIDE SEQUENCE [GENOMIC DNA]</scope>
</reference>
<reference key="2">
    <citation type="book" date="2006" name="Gram positive pathogens, 2nd edition">
        <title>The Staphylococcus aureus NCTC 8325 genome.</title>
        <editorList>
            <person name="Fischetti V."/>
            <person name="Novick R."/>
            <person name="Ferretti J."/>
            <person name="Portnoy D."/>
            <person name="Rood J."/>
        </editorList>
        <authorList>
            <person name="Gillaspy A.F."/>
            <person name="Worrell V."/>
            <person name="Orvis J."/>
            <person name="Roe B.A."/>
            <person name="Dyer D.W."/>
            <person name="Iandolo J.J."/>
        </authorList>
    </citation>
    <scope>NUCLEOTIDE SEQUENCE [LARGE SCALE GENOMIC DNA]</scope>
    <source>
        <strain>NCTC 8325 / PS 47</strain>
    </source>
</reference>
<keyword id="KW-0067">ATP-binding</keyword>
<keyword id="KW-0238">DNA-binding</keyword>
<keyword id="KW-0413">Isomerase</keyword>
<keyword id="KW-0460">Magnesium</keyword>
<keyword id="KW-0479">Metal-binding</keyword>
<keyword id="KW-0547">Nucleotide-binding</keyword>
<keyword id="KW-1185">Reference proteome</keyword>
<keyword id="KW-0799">Topoisomerase</keyword>
<feature type="chain" id="PRO_0000247971" description="DNA topoisomerase 4 subunit B">
    <location>
        <begin position="1"/>
        <end position="663"/>
    </location>
</feature>
<feature type="domain" description="Toprim" evidence="1">
    <location>
        <begin position="424"/>
        <end position="538"/>
    </location>
</feature>
<feature type="region of interest" description="Disordered" evidence="2">
    <location>
        <begin position="386"/>
        <end position="416"/>
    </location>
</feature>
<feature type="compositionally biased region" description="Basic and acidic residues" evidence="2">
    <location>
        <begin position="387"/>
        <end position="398"/>
    </location>
</feature>
<feature type="binding site" evidence="1">
    <location>
        <position position="7"/>
    </location>
    <ligand>
        <name>ATP</name>
        <dbReference type="ChEBI" id="CHEBI:30616"/>
    </ligand>
</feature>
<feature type="binding site" evidence="1">
    <location>
        <position position="47"/>
    </location>
    <ligand>
        <name>ATP</name>
        <dbReference type="ChEBI" id="CHEBI:30616"/>
    </ligand>
</feature>
<feature type="binding site" evidence="1">
    <location>
        <position position="74"/>
    </location>
    <ligand>
        <name>ATP</name>
        <dbReference type="ChEBI" id="CHEBI:30616"/>
    </ligand>
</feature>
<feature type="binding site" evidence="1">
    <location>
        <begin position="114"/>
        <end position="120"/>
    </location>
    <ligand>
        <name>ATP</name>
        <dbReference type="ChEBI" id="CHEBI:30616"/>
    </ligand>
</feature>
<feature type="binding site" evidence="1">
    <location>
        <position position="341"/>
    </location>
    <ligand>
        <name>ATP</name>
        <dbReference type="ChEBI" id="CHEBI:30616"/>
    </ligand>
</feature>
<feature type="binding site" evidence="1">
    <location>
        <position position="430"/>
    </location>
    <ligand>
        <name>Mg(2+)</name>
        <dbReference type="ChEBI" id="CHEBI:18420"/>
        <label>1</label>
        <note>catalytic</note>
    </ligand>
</feature>
<feature type="binding site" evidence="1">
    <location>
        <position position="503"/>
    </location>
    <ligand>
        <name>Mg(2+)</name>
        <dbReference type="ChEBI" id="CHEBI:18420"/>
        <label>1</label>
        <note>catalytic</note>
    </ligand>
</feature>
<feature type="binding site" evidence="1">
    <location>
        <position position="503"/>
    </location>
    <ligand>
        <name>Mg(2+)</name>
        <dbReference type="ChEBI" id="CHEBI:18420"/>
        <label>2</label>
    </ligand>
</feature>
<feature type="binding site" evidence="1">
    <location>
        <position position="505"/>
    </location>
    <ligand>
        <name>Mg(2+)</name>
        <dbReference type="ChEBI" id="CHEBI:18420"/>
        <label>2</label>
    </ligand>
</feature>
<feature type="site" description="Interaction with DNA" evidence="1">
    <location>
        <position position="455"/>
    </location>
</feature>
<feature type="site" description="Interaction with DNA" evidence="1">
    <location>
        <position position="458"/>
    </location>
</feature>
<feature type="site" description="Interaction with DNA" evidence="1">
    <location>
        <position position="510"/>
    </location>
</feature>
<feature type="site" description="Interaction with DNA" evidence="1">
    <location>
        <position position="626"/>
    </location>
</feature>
<protein>
    <recommendedName>
        <fullName evidence="1">DNA topoisomerase 4 subunit B</fullName>
        <ecNumber evidence="1">5.6.2.2</ecNumber>
    </recommendedName>
    <alternativeName>
        <fullName evidence="1">Topoisomerase IV subunit B</fullName>
    </alternativeName>
</protein>
<name>PARE_STAA8</name>
<comment type="function">
    <text evidence="1">Topoisomerase IV is essential for chromosome segregation. It relaxes supercoiled DNA. Performs the decatenation events required during the replication of a circular DNA molecule.</text>
</comment>
<comment type="catalytic activity">
    <reaction evidence="1">
        <text>ATP-dependent breakage, passage and rejoining of double-stranded DNA.</text>
        <dbReference type="EC" id="5.6.2.2"/>
    </reaction>
</comment>
<comment type="cofactor">
    <cofactor evidence="1">
        <name>Mg(2+)</name>
        <dbReference type="ChEBI" id="CHEBI:18420"/>
    </cofactor>
    <cofactor evidence="1">
        <name>Mn(2+)</name>
        <dbReference type="ChEBI" id="CHEBI:29035"/>
    </cofactor>
    <cofactor evidence="1">
        <name>Ca(2+)</name>
        <dbReference type="ChEBI" id="CHEBI:29108"/>
    </cofactor>
    <text evidence="1">Binds two Mg(2+) per subunit. The magnesium ions form salt bridges with both the protein and the DNA. Can also accept other divalent metal cations, such as Mn(2+) or Ca(2+).</text>
</comment>
<comment type="subunit">
    <text>Heterotetramer composed of ParC and ParE.</text>
</comment>
<comment type="similarity">
    <text evidence="1">Belongs to the type II topoisomerase family. ParE type 2 subfamily.</text>
</comment>
<accession>Q2FYS5</accession>
<accession>P0A0L0</accession>
<accession>P50072</accession>
<organism>
    <name type="scientific">Staphylococcus aureus (strain NCTC 8325 / PS 47)</name>
    <dbReference type="NCBI Taxonomy" id="93061"/>
    <lineage>
        <taxon>Bacteria</taxon>
        <taxon>Bacillati</taxon>
        <taxon>Bacillota</taxon>
        <taxon>Bacilli</taxon>
        <taxon>Bacillales</taxon>
        <taxon>Staphylococcaceae</taxon>
        <taxon>Staphylococcus</taxon>
    </lineage>
</organism>
<sequence length="663" mass="74364">MNKQNNYSDDSIQVLEGLEAVRKRPGMYIGSTDKRGLHHLVYEIVDNSVDEVLNGYGNEIDVTINKDGSISIEDNGRGMPTGIHKSGKPTVEVIFTVLHAGGKFGQGGYKTSGGLHGVGASVVNALSEWLEVEIHRDGNIYHQSFKNGGSPSSGLVKKGKTKKTGTKVTFKPDDTIFKASTSFNFDVLSERLQESAFLLKNLKITLNDLRSGKERQEHYHYEEGIKEFVSYVNEGKEVLHDVATFSGEANGIEVDVAFQYNDQYSESILSFVNNVRTKDGGTHEVGFKTAMTRVFNDYARRINELKTKDKNLDGNDIREGLTAVVSVRIPEELLQFEGQTKSKLGTSEARSAVDSVVADKLPFYLEEKGQLSKSLVKKAIKAQQAREAARKAREDARSGKKNKRKDTLLSGKLTPAQSKNTEKNELYLVEGDSAGGSAKLGRDRKFQAILPLRGKVINTEKARLEDIFKNEEINTIIHTIGAGVGTDFKIEDSNYNRVIIMTDADTDGAHIQVLLLTFFFKYMKPLVQAGRVFIALPPLYKLEKGKGKTKRVEYAWTDEELNKLQKELGKGFTLQRYKGLGEMNPEQLWETTMNPETRTLIRVQVEDEVRSSKRVTTLMGDKVQPRREWIEKHVEFGMQEDQSILDNSEVQVLENDQFDEEEI</sequence>